<reference key="1">
    <citation type="journal article" date="2011" name="J. Bacteriol.">
        <title>Comparative genomics of 28 Salmonella enterica isolates: evidence for CRISPR-mediated adaptive sublineage evolution.</title>
        <authorList>
            <person name="Fricke W.F."/>
            <person name="Mammel M.K."/>
            <person name="McDermott P.F."/>
            <person name="Tartera C."/>
            <person name="White D.G."/>
            <person name="Leclerc J.E."/>
            <person name="Ravel J."/>
            <person name="Cebula T.A."/>
        </authorList>
    </citation>
    <scope>NUCLEOTIDE SEQUENCE [LARGE SCALE GENOMIC DNA]</scope>
    <source>
        <strain>SL483</strain>
    </source>
</reference>
<gene>
    <name evidence="1" type="primary">glmU</name>
    <name type="ordered locus">SeAg_B4087</name>
</gene>
<dbReference type="EC" id="2.7.7.23" evidence="1"/>
<dbReference type="EC" id="2.3.1.157" evidence="1"/>
<dbReference type="EMBL" id="CP001138">
    <property type="protein sequence ID" value="ACH51692.1"/>
    <property type="molecule type" value="Genomic_DNA"/>
</dbReference>
<dbReference type="RefSeq" id="WP_000934843.1">
    <property type="nucleotide sequence ID" value="NC_011149.1"/>
</dbReference>
<dbReference type="SMR" id="B5EYZ3"/>
<dbReference type="KEGG" id="sea:SeAg_B4087"/>
<dbReference type="HOGENOM" id="CLU_029499_15_2_6"/>
<dbReference type="UniPathway" id="UPA00113">
    <property type="reaction ID" value="UER00532"/>
</dbReference>
<dbReference type="UniPathway" id="UPA00113">
    <property type="reaction ID" value="UER00533"/>
</dbReference>
<dbReference type="UniPathway" id="UPA00973"/>
<dbReference type="Proteomes" id="UP000008819">
    <property type="component" value="Chromosome"/>
</dbReference>
<dbReference type="GO" id="GO:0005737">
    <property type="term" value="C:cytoplasm"/>
    <property type="evidence" value="ECO:0007669"/>
    <property type="project" value="UniProtKB-SubCell"/>
</dbReference>
<dbReference type="GO" id="GO:0016020">
    <property type="term" value="C:membrane"/>
    <property type="evidence" value="ECO:0007669"/>
    <property type="project" value="GOC"/>
</dbReference>
<dbReference type="GO" id="GO:0019134">
    <property type="term" value="F:glucosamine-1-phosphate N-acetyltransferase activity"/>
    <property type="evidence" value="ECO:0007669"/>
    <property type="project" value="UniProtKB-UniRule"/>
</dbReference>
<dbReference type="GO" id="GO:0000287">
    <property type="term" value="F:magnesium ion binding"/>
    <property type="evidence" value="ECO:0007669"/>
    <property type="project" value="UniProtKB-UniRule"/>
</dbReference>
<dbReference type="GO" id="GO:0003977">
    <property type="term" value="F:UDP-N-acetylglucosamine diphosphorylase activity"/>
    <property type="evidence" value="ECO:0007669"/>
    <property type="project" value="UniProtKB-UniRule"/>
</dbReference>
<dbReference type="GO" id="GO:0000902">
    <property type="term" value="P:cell morphogenesis"/>
    <property type="evidence" value="ECO:0007669"/>
    <property type="project" value="UniProtKB-UniRule"/>
</dbReference>
<dbReference type="GO" id="GO:0071555">
    <property type="term" value="P:cell wall organization"/>
    <property type="evidence" value="ECO:0007669"/>
    <property type="project" value="UniProtKB-KW"/>
</dbReference>
<dbReference type="GO" id="GO:0009245">
    <property type="term" value="P:lipid A biosynthetic process"/>
    <property type="evidence" value="ECO:0007669"/>
    <property type="project" value="UniProtKB-UniRule"/>
</dbReference>
<dbReference type="GO" id="GO:0009252">
    <property type="term" value="P:peptidoglycan biosynthetic process"/>
    <property type="evidence" value="ECO:0007669"/>
    <property type="project" value="UniProtKB-UniRule"/>
</dbReference>
<dbReference type="GO" id="GO:0008360">
    <property type="term" value="P:regulation of cell shape"/>
    <property type="evidence" value="ECO:0007669"/>
    <property type="project" value="UniProtKB-KW"/>
</dbReference>
<dbReference type="GO" id="GO:0006048">
    <property type="term" value="P:UDP-N-acetylglucosamine biosynthetic process"/>
    <property type="evidence" value="ECO:0007669"/>
    <property type="project" value="UniProtKB-UniPathway"/>
</dbReference>
<dbReference type="CDD" id="cd02540">
    <property type="entry name" value="GT2_GlmU_N_bac"/>
    <property type="match status" value="1"/>
</dbReference>
<dbReference type="CDD" id="cd03353">
    <property type="entry name" value="LbH_GlmU_C"/>
    <property type="match status" value="1"/>
</dbReference>
<dbReference type="FunFam" id="2.160.10.10:FF:000011">
    <property type="entry name" value="Bifunctional protein GlmU"/>
    <property type="match status" value="1"/>
</dbReference>
<dbReference type="FunFam" id="3.90.550.10:FF:000006">
    <property type="entry name" value="Bifunctional protein GlmU"/>
    <property type="match status" value="1"/>
</dbReference>
<dbReference type="Gene3D" id="2.160.10.10">
    <property type="entry name" value="Hexapeptide repeat proteins"/>
    <property type="match status" value="1"/>
</dbReference>
<dbReference type="Gene3D" id="3.90.550.10">
    <property type="entry name" value="Spore Coat Polysaccharide Biosynthesis Protein SpsA, Chain A"/>
    <property type="match status" value="1"/>
</dbReference>
<dbReference type="HAMAP" id="MF_01631">
    <property type="entry name" value="GlmU"/>
    <property type="match status" value="1"/>
</dbReference>
<dbReference type="InterPro" id="IPR005882">
    <property type="entry name" value="Bifunctional_GlmU"/>
</dbReference>
<dbReference type="InterPro" id="IPR050065">
    <property type="entry name" value="GlmU-like"/>
</dbReference>
<dbReference type="InterPro" id="IPR038009">
    <property type="entry name" value="GlmU_C_LbH"/>
</dbReference>
<dbReference type="InterPro" id="IPR001451">
    <property type="entry name" value="Hexapep"/>
</dbReference>
<dbReference type="InterPro" id="IPR018357">
    <property type="entry name" value="Hexapep_transf_CS"/>
</dbReference>
<dbReference type="InterPro" id="IPR025877">
    <property type="entry name" value="MobA-like_NTP_Trfase"/>
</dbReference>
<dbReference type="InterPro" id="IPR029044">
    <property type="entry name" value="Nucleotide-diphossugar_trans"/>
</dbReference>
<dbReference type="InterPro" id="IPR011004">
    <property type="entry name" value="Trimer_LpxA-like_sf"/>
</dbReference>
<dbReference type="NCBIfam" id="TIGR01173">
    <property type="entry name" value="glmU"/>
    <property type="match status" value="1"/>
</dbReference>
<dbReference type="NCBIfam" id="NF006986">
    <property type="entry name" value="PRK09451.1"/>
    <property type="match status" value="1"/>
</dbReference>
<dbReference type="PANTHER" id="PTHR43584:SF3">
    <property type="entry name" value="BIFUNCTIONAL PROTEIN GLMU"/>
    <property type="match status" value="1"/>
</dbReference>
<dbReference type="PANTHER" id="PTHR43584">
    <property type="entry name" value="NUCLEOTIDYL TRANSFERASE"/>
    <property type="match status" value="1"/>
</dbReference>
<dbReference type="Pfam" id="PF00132">
    <property type="entry name" value="Hexapep"/>
    <property type="match status" value="1"/>
</dbReference>
<dbReference type="Pfam" id="PF12804">
    <property type="entry name" value="NTP_transf_3"/>
    <property type="match status" value="1"/>
</dbReference>
<dbReference type="SUPFAM" id="SSF53448">
    <property type="entry name" value="Nucleotide-diphospho-sugar transferases"/>
    <property type="match status" value="1"/>
</dbReference>
<dbReference type="SUPFAM" id="SSF51161">
    <property type="entry name" value="Trimeric LpxA-like enzymes"/>
    <property type="match status" value="1"/>
</dbReference>
<dbReference type="PROSITE" id="PS00101">
    <property type="entry name" value="HEXAPEP_TRANSFERASES"/>
    <property type="match status" value="1"/>
</dbReference>
<feature type="chain" id="PRO_1000186480" description="Bifunctional protein GlmU">
    <location>
        <begin position="1"/>
        <end position="456"/>
    </location>
</feature>
<feature type="region of interest" description="Pyrophosphorylase" evidence="1">
    <location>
        <begin position="1"/>
        <end position="229"/>
    </location>
</feature>
<feature type="region of interest" description="Linker" evidence="1">
    <location>
        <begin position="230"/>
        <end position="250"/>
    </location>
</feature>
<feature type="region of interest" description="N-acetyltransferase" evidence="1">
    <location>
        <begin position="251"/>
        <end position="456"/>
    </location>
</feature>
<feature type="active site" description="Proton acceptor" evidence="1">
    <location>
        <position position="363"/>
    </location>
</feature>
<feature type="binding site" evidence="1">
    <location>
        <begin position="11"/>
        <end position="14"/>
    </location>
    <ligand>
        <name>UDP-N-acetyl-alpha-D-glucosamine</name>
        <dbReference type="ChEBI" id="CHEBI:57705"/>
    </ligand>
</feature>
<feature type="binding site" evidence="1">
    <location>
        <position position="25"/>
    </location>
    <ligand>
        <name>UDP-N-acetyl-alpha-D-glucosamine</name>
        <dbReference type="ChEBI" id="CHEBI:57705"/>
    </ligand>
</feature>
<feature type="binding site" evidence="1">
    <location>
        <position position="76"/>
    </location>
    <ligand>
        <name>UDP-N-acetyl-alpha-D-glucosamine</name>
        <dbReference type="ChEBI" id="CHEBI:57705"/>
    </ligand>
</feature>
<feature type="binding site" evidence="1">
    <location>
        <begin position="81"/>
        <end position="82"/>
    </location>
    <ligand>
        <name>UDP-N-acetyl-alpha-D-glucosamine</name>
        <dbReference type="ChEBI" id="CHEBI:57705"/>
    </ligand>
</feature>
<feature type="binding site" evidence="1">
    <location>
        <begin position="103"/>
        <end position="105"/>
    </location>
    <ligand>
        <name>UDP-N-acetyl-alpha-D-glucosamine</name>
        <dbReference type="ChEBI" id="CHEBI:57705"/>
    </ligand>
</feature>
<feature type="binding site" evidence="1">
    <location>
        <position position="105"/>
    </location>
    <ligand>
        <name>Mg(2+)</name>
        <dbReference type="ChEBI" id="CHEBI:18420"/>
    </ligand>
</feature>
<feature type="binding site" evidence="1">
    <location>
        <position position="140"/>
    </location>
    <ligand>
        <name>UDP-N-acetyl-alpha-D-glucosamine</name>
        <dbReference type="ChEBI" id="CHEBI:57705"/>
    </ligand>
</feature>
<feature type="binding site" evidence="1">
    <location>
        <position position="154"/>
    </location>
    <ligand>
        <name>UDP-N-acetyl-alpha-D-glucosamine</name>
        <dbReference type="ChEBI" id="CHEBI:57705"/>
    </ligand>
</feature>
<feature type="binding site" evidence="1">
    <location>
        <position position="169"/>
    </location>
    <ligand>
        <name>UDP-N-acetyl-alpha-D-glucosamine</name>
        <dbReference type="ChEBI" id="CHEBI:57705"/>
    </ligand>
</feature>
<feature type="binding site" evidence="1">
    <location>
        <position position="227"/>
    </location>
    <ligand>
        <name>Mg(2+)</name>
        <dbReference type="ChEBI" id="CHEBI:18420"/>
    </ligand>
</feature>
<feature type="binding site" evidence="1">
    <location>
        <position position="227"/>
    </location>
    <ligand>
        <name>UDP-N-acetyl-alpha-D-glucosamine</name>
        <dbReference type="ChEBI" id="CHEBI:57705"/>
    </ligand>
</feature>
<feature type="binding site" evidence="1">
    <location>
        <position position="333"/>
    </location>
    <ligand>
        <name>UDP-N-acetyl-alpha-D-glucosamine</name>
        <dbReference type="ChEBI" id="CHEBI:57705"/>
    </ligand>
</feature>
<feature type="binding site" evidence="1">
    <location>
        <position position="351"/>
    </location>
    <ligand>
        <name>UDP-N-acetyl-alpha-D-glucosamine</name>
        <dbReference type="ChEBI" id="CHEBI:57705"/>
    </ligand>
</feature>
<feature type="binding site" evidence="1">
    <location>
        <position position="366"/>
    </location>
    <ligand>
        <name>UDP-N-acetyl-alpha-D-glucosamine</name>
        <dbReference type="ChEBI" id="CHEBI:57705"/>
    </ligand>
</feature>
<feature type="binding site" evidence="1">
    <location>
        <position position="377"/>
    </location>
    <ligand>
        <name>UDP-N-acetyl-alpha-D-glucosamine</name>
        <dbReference type="ChEBI" id="CHEBI:57705"/>
    </ligand>
</feature>
<feature type="binding site" evidence="1">
    <location>
        <position position="380"/>
    </location>
    <ligand>
        <name>acetyl-CoA</name>
        <dbReference type="ChEBI" id="CHEBI:57288"/>
    </ligand>
</feature>
<feature type="binding site" evidence="1">
    <location>
        <begin position="386"/>
        <end position="387"/>
    </location>
    <ligand>
        <name>acetyl-CoA</name>
        <dbReference type="ChEBI" id="CHEBI:57288"/>
    </ligand>
</feature>
<feature type="binding site" evidence="1">
    <location>
        <position position="405"/>
    </location>
    <ligand>
        <name>acetyl-CoA</name>
        <dbReference type="ChEBI" id="CHEBI:57288"/>
    </ligand>
</feature>
<feature type="binding site" evidence="1">
    <location>
        <position position="423"/>
    </location>
    <ligand>
        <name>acetyl-CoA</name>
        <dbReference type="ChEBI" id="CHEBI:57288"/>
    </ligand>
</feature>
<feature type="binding site" evidence="1">
    <location>
        <position position="440"/>
    </location>
    <ligand>
        <name>acetyl-CoA</name>
        <dbReference type="ChEBI" id="CHEBI:57288"/>
    </ligand>
</feature>
<keyword id="KW-0012">Acyltransferase</keyword>
<keyword id="KW-0133">Cell shape</keyword>
<keyword id="KW-0961">Cell wall biogenesis/degradation</keyword>
<keyword id="KW-0963">Cytoplasm</keyword>
<keyword id="KW-0460">Magnesium</keyword>
<keyword id="KW-0479">Metal-binding</keyword>
<keyword id="KW-0511">Multifunctional enzyme</keyword>
<keyword id="KW-0548">Nucleotidyltransferase</keyword>
<keyword id="KW-0573">Peptidoglycan synthesis</keyword>
<keyword id="KW-0677">Repeat</keyword>
<keyword id="KW-0808">Transferase</keyword>
<name>GLMU_SALA4</name>
<organism>
    <name type="scientific">Salmonella agona (strain SL483)</name>
    <dbReference type="NCBI Taxonomy" id="454166"/>
    <lineage>
        <taxon>Bacteria</taxon>
        <taxon>Pseudomonadati</taxon>
        <taxon>Pseudomonadota</taxon>
        <taxon>Gammaproteobacteria</taxon>
        <taxon>Enterobacterales</taxon>
        <taxon>Enterobacteriaceae</taxon>
        <taxon>Salmonella</taxon>
    </lineage>
</organism>
<proteinExistence type="inferred from homology"/>
<comment type="function">
    <text evidence="1">Catalyzes the last two sequential reactions in the de novo biosynthetic pathway for UDP-N-acetylglucosamine (UDP-GlcNAc). The C-terminal domain catalyzes the transfer of acetyl group from acetyl coenzyme A to glucosamine-1-phosphate (GlcN-1-P) to produce N-acetylglucosamine-1-phosphate (GlcNAc-1-P), which is converted into UDP-GlcNAc by the transfer of uridine 5-monophosphate (from uridine 5-triphosphate), a reaction catalyzed by the N-terminal domain.</text>
</comment>
<comment type="catalytic activity">
    <reaction evidence="1">
        <text>alpha-D-glucosamine 1-phosphate + acetyl-CoA = N-acetyl-alpha-D-glucosamine 1-phosphate + CoA + H(+)</text>
        <dbReference type="Rhea" id="RHEA:13725"/>
        <dbReference type="ChEBI" id="CHEBI:15378"/>
        <dbReference type="ChEBI" id="CHEBI:57287"/>
        <dbReference type="ChEBI" id="CHEBI:57288"/>
        <dbReference type="ChEBI" id="CHEBI:57776"/>
        <dbReference type="ChEBI" id="CHEBI:58516"/>
        <dbReference type="EC" id="2.3.1.157"/>
    </reaction>
</comment>
<comment type="catalytic activity">
    <reaction evidence="1">
        <text>N-acetyl-alpha-D-glucosamine 1-phosphate + UTP + H(+) = UDP-N-acetyl-alpha-D-glucosamine + diphosphate</text>
        <dbReference type="Rhea" id="RHEA:13509"/>
        <dbReference type="ChEBI" id="CHEBI:15378"/>
        <dbReference type="ChEBI" id="CHEBI:33019"/>
        <dbReference type="ChEBI" id="CHEBI:46398"/>
        <dbReference type="ChEBI" id="CHEBI:57705"/>
        <dbReference type="ChEBI" id="CHEBI:57776"/>
        <dbReference type="EC" id="2.7.7.23"/>
    </reaction>
</comment>
<comment type="cofactor">
    <cofactor evidence="1">
        <name>Mg(2+)</name>
        <dbReference type="ChEBI" id="CHEBI:18420"/>
    </cofactor>
    <text evidence="1">Binds 1 Mg(2+) ion per subunit.</text>
</comment>
<comment type="pathway">
    <text evidence="1">Nucleotide-sugar biosynthesis; UDP-N-acetyl-alpha-D-glucosamine biosynthesis; N-acetyl-alpha-D-glucosamine 1-phosphate from alpha-D-glucosamine 6-phosphate (route II): step 2/2.</text>
</comment>
<comment type="pathway">
    <text evidence="1">Nucleotide-sugar biosynthesis; UDP-N-acetyl-alpha-D-glucosamine biosynthesis; UDP-N-acetyl-alpha-D-glucosamine from N-acetyl-alpha-D-glucosamine 1-phosphate: step 1/1.</text>
</comment>
<comment type="pathway">
    <text evidence="1">Bacterial outer membrane biogenesis; LPS lipid A biosynthesis.</text>
</comment>
<comment type="subunit">
    <text evidence="1">Homotrimer.</text>
</comment>
<comment type="subcellular location">
    <subcellularLocation>
        <location evidence="1">Cytoplasm</location>
    </subcellularLocation>
</comment>
<comment type="similarity">
    <text evidence="1">In the N-terminal section; belongs to the N-acetylglucosamine-1-phosphate uridyltransferase family.</text>
</comment>
<comment type="similarity">
    <text evidence="1">In the C-terminal section; belongs to the transferase hexapeptide repeat family.</text>
</comment>
<accession>B5EYZ3</accession>
<protein>
    <recommendedName>
        <fullName evidence="1">Bifunctional protein GlmU</fullName>
    </recommendedName>
    <domain>
        <recommendedName>
            <fullName evidence="1">UDP-N-acetylglucosamine pyrophosphorylase</fullName>
            <ecNumber evidence="1">2.7.7.23</ecNumber>
        </recommendedName>
        <alternativeName>
            <fullName evidence="1">N-acetylglucosamine-1-phosphate uridyltransferase</fullName>
        </alternativeName>
    </domain>
    <domain>
        <recommendedName>
            <fullName evidence="1">Glucosamine-1-phosphate N-acetyltransferase</fullName>
            <ecNumber evidence="1">2.3.1.157</ecNumber>
        </recommendedName>
    </domain>
</protein>
<sequence length="456" mass="49161">MLNSAMSVVILAAGKGTRMYSDIPKVLHTLAGKPMVQHVIDAATKLGAAQVHLVYGHGGELLKQTLKDDKLNWVLQAEQLGTGHAMQQAAPFFSDDEDILMLYGDVPLISVETLQRLRDAKPQGGIGLLTVKLDDPSGYGHITRENGKVTGIVEHKDATDEQRQIQEINTGILIANGADLKRWLSKLTNNNAQGEYYITDIIALAYQEGREIAAVHPARISETDGVNNRLQLSRLERIYQAEQAEKLLLSGVMLRDPARFDLRGTLHCGMDVEIDANVIIEGYVTLGHRVKIGAGCIIKNSVIGDDCEISPYSVVEDAHLEAACTIGPFARLRPGAELLAGAHVGNFVEMKKARLGKGSKAGHLTYLGDAEIGDNVNIGAGTITCNYDGANKFKTVIGDDVFVGSDTQLVAPVTVGKGATIAAGTTVTRNVADNELVLSRVPQVHKQGWQRPVKKK</sequence>
<evidence type="ECO:0000255" key="1">
    <source>
        <dbReference type="HAMAP-Rule" id="MF_01631"/>
    </source>
</evidence>